<organism>
    <name type="scientific">Aeromonas salmonicida (strain A449)</name>
    <dbReference type="NCBI Taxonomy" id="382245"/>
    <lineage>
        <taxon>Bacteria</taxon>
        <taxon>Pseudomonadati</taxon>
        <taxon>Pseudomonadota</taxon>
        <taxon>Gammaproteobacteria</taxon>
        <taxon>Aeromonadales</taxon>
        <taxon>Aeromonadaceae</taxon>
        <taxon>Aeromonas</taxon>
    </lineage>
</organism>
<dbReference type="EC" id="2.1.2.9" evidence="1"/>
<dbReference type="EMBL" id="CP000644">
    <property type="protein sequence ID" value="ABO92080.1"/>
    <property type="molecule type" value="Genomic_DNA"/>
</dbReference>
<dbReference type="RefSeq" id="WP_005319927.1">
    <property type="nucleotide sequence ID" value="NC_009348.1"/>
</dbReference>
<dbReference type="SMR" id="A4ST58"/>
<dbReference type="STRING" id="29491.GCA_000820065_03411"/>
<dbReference type="KEGG" id="asa:ASA_4141"/>
<dbReference type="PATRIC" id="fig|382245.13.peg.4111"/>
<dbReference type="eggNOG" id="COG0223">
    <property type="taxonomic scope" value="Bacteria"/>
</dbReference>
<dbReference type="HOGENOM" id="CLU_033347_1_2_6"/>
<dbReference type="Proteomes" id="UP000000225">
    <property type="component" value="Chromosome"/>
</dbReference>
<dbReference type="GO" id="GO:0005829">
    <property type="term" value="C:cytosol"/>
    <property type="evidence" value="ECO:0007669"/>
    <property type="project" value="TreeGrafter"/>
</dbReference>
<dbReference type="GO" id="GO:0004479">
    <property type="term" value="F:methionyl-tRNA formyltransferase activity"/>
    <property type="evidence" value="ECO:0007669"/>
    <property type="project" value="UniProtKB-UniRule"/>
</dbReference>
<dbReference type="CDD" id="cd08646">
    <property type="entry name" value="FMT_core_Met-tRNA-FMT_N"/>
    <property type="match status" value="1"/>
</dbReference>
<dbReference type="CDD" id="cd08704">
    <property type="entry name" value="Met_tRNA_FMT_C"/>
    <property type="match status" value="1"/>
</dbReference>
<dbReference type="FunFam" id="3.40.50.12230:FF:000001">
    <property type="entry name" value="Methionyl-tRNA formyltransferase"/>
    <property type="match status" value="1"/>
</dbReference>
<dbReference type="FunFam" id="3.40.50.170:FF:000003">
    <property type="entry name" value="Methionyl-tRNA formyltransferase"/>
    <property type="match status" value="1"/>
</dbReference>
<dbReference type="Gene3D" id="3.10.25.10">
    <property type="entry name" value="Formyl transferase, C-terminal domain"/>
    <property type="match status" value="1"/>
</dbReference>
<dbReference type="Gene3D" id="3.40.50.170">
    <property type="entry name" value="Formyl transferase, N-terminal domain"/>
    <property type="match status" value="1"/>
</dbReference>
<dbReference type="HAMAP" id="MF_00182">
    <property type="entry name" value="Formyl_trans"/>
    <property type="match status" value="1"/>
</dbReference>
<dbReference type="InterPro" id="IPR005794">
    <property type="entry name" value="Fmt"/>
</dbReference>
<dbReference type="InterPro" id="IPR005793">
    <property type="entry name" value="Formyl_trans_C"/>
</dbReference>
<dbReference type="InterPro" id="IPR037022">
    <property type="entry name" value="Formyl_trans_C_sf"/>
</dbReference>
<dbReference type="InterPro" id="IPR002376">
    <property type="entry name" value="Formyl_transf_N"/>
</dbReference>
<dbReference type="InterPro" id="IPR036477">
    <property type="entry name" value="Formyl_transf_N_sf"/>
</dbReference>
<dbReference type="InterPro" id="IPR011034">
    <property type="entry name" value="Formyl_transferase-like_C_sf"/>
</dbReference>
<dbReference type="InterPro" id="IPR001555">
    <property type="entry name" value="GART_AS"/>
</dbReference>
<dbReference type="InterPro" id="IPR044135">
    <property type="entry name" value="Met-tRNA-FMT_C"/>
</dbReference>
<dbReference type="InterPro" id="IPR041711">
    <property type="entry name" value="Met-tRNA-FMT_N"/>
</dbReference>
<dbReference type="NCBIfam" id="TIGR00460">
    <property type="entry name" value="fmt"/>
    <property type="match status" value="1"/>
</dbReference>
<dbReference type="PANTHER" id="PTHR11138">
    <property type="entry name" value="METHIONYL-TRNA FORMYLTRANSFERASE"/>
    <property type="match status" value="1"/>
</dbReference>
<dbReference type="PANTHER" id="PTHR11138:SF5">
    <property type="entry name" value="METHIONYL-TRNA FORMYLTRANSFERASE, MITOCHONDRIAL"/>
    <property type="match status" value="1"/>
</dbReference>
<dbReference type="Pfam" id="PF02911">
    <property type="entry name" value="Formyl_trans_C"/>
    <property type="match status" value="1"/>
</dbReference>
<dbReference type="Pfam" id="PF00551">
    <property type="entry name" value="Formyl_trans_N"/>
    <property type="match status" value="1"/>
</dbReference>
<dbReference type="SUPFAM" id="SSF50486">
    <property type="entry name" value="FMT C-terminal domain-like"/>
    <property type="match status" value="1"/>
</dbReference>
<dbReference type="SUPFAM" id="SSF53328">
    <property type="entry name" value="Formyltransferase"/>
    <property type="match status" value="1"/>
</dbReference>
<dbReference type="PROSITE" id="PS00373">
    <property type="entry name" value="GART"/>
    <property type="match status" value="1"/>
</dbReference>
<keyword id="KW-0648">Protein biosynthesis</keyword>
<keyword id="KW-0808">Transferase</keyword>
<sequence length="314" mass="33942">MNKLKLIFAGTPDFAARHLAALLSSDHEVVAVYTQPDKPAGRGQKLTASPVKELALTHNLPVYQPASLRKEEAQAELASLGADLMVVVAYGLILPKVVLDTPRLGCINVHGSLLPRWRGAAPIQRSIWAGDTETGVTIMQMDVGLDTGAMIRKVTCPIAANETSTSLYDKLAELGPQALVDTINAMAAGETAAEEQDDALANYAEKLSKEEARIDWSMEAVAIDRCIRAFNPWPISWFEVAGQTIKVWQAEVINSDHGQPTGTLLKADKQGIDIATGLGVLRLLTLQPPGKKAMSVSDLLNSRRDWFEPGTQLN</sequence>
<gene>
    <name evidence="1" type="primary">fmt</name>
    <name type="ordered locus">ASA_4141</name>
</gene>
<reference key="1">
    <citation type="journal article" date="2008" name="BMC Genomics">
        <title>The genome of Aeromonas salmonicida subsp. salmonicida A449: insights into the evolution of a fish pathogen.</title>
        <authorList>
            <person name="Reith M.E."/>
            <person name="Singh R.K."/>
            <person name="Curtis B."/>
            <person name="Boyd J.M."/>
            <person name="Bouevitch A."/>
            <person name="Kimball J."/>
            <person name="Munholland J."/>
            <person name="Murphy C."/>
            <person name="Sarty D."/>
            <person name="Williams J."/>
            <person name="Nash J.H."/>
            <person name="Johnson S.C."/>
            <person name="Brown L.L."/>
        </authorList>
    </citation>
    <scope>NUCLEOTIDE SEQUENCE [LARGE SCALE GENOMIC DNA]</scope>
    <source>
        <strain>A449</strain>
    </source>
</reference>
<protein>
    <recommendedName>
        <fullName evidence="1">Methionyl-tRNA formyltransferase</fullName>
        <ecNumber evidence="1">2.1.2.9</ecNumber>
    </recommendedName>
</protein>
<proteinExistence type="inferred from homology"/>
<name>FMT_AERS4</name>
<evidence type="ECO:0000255" key="1">
    <source>
        <dbReference type="HAMAP-Rule" id="MF_00182"/>
    </source>
</evidence>
<accession>A4ST58</accession>
<feature type="chain" id="PRO_1000071658" description="Methionyl-tRNA formyltransferase">
    <location>
        <begin position="1"/>
        <end position="314"/>
    </location>
</feature>
<feature type="binding site" evidence="1">
    <location>
        <begin position="112"/>
        <end position="115"/>
    </location>
    <ligand>
        <name>(6S)-5,6,7,8-tetrahydrofolate</name>
        <dbReference type="ChEBI" id="CHEBI:57453"/>
    </ligand>
</feature>
<comment type="function">
    <text evidence="1">Attaches a formyl group to the free amino group of methionyl-tRNA(fMet). The formyl group appears to play a dual role in the initiator identity of N-formylmethionyl-tRNA by promoting its recognition by IF2 and preventing the misappropriation of this tRNA by the elongation apparatus.</text>
</comment>
<comment type="catalytic activity">
    <reaction evidence="1">
        <text>L-methionyl-tRNA(fMet) + (6R)-10-formyltetrahydrofolate = N-formyl-L-methionyl-tRNA(fMet) + (6S)-5,6,7,8-tetrahydrofolate + H(+)</text>
        <dbReference type="Rhea" id="RHEA:24380"/>
        <dbReference type="Rhea" id="RHEA-COMP:9952"/>
        <dbReference type="Rhea" id="RHEA-COMP:9953"/>
        <dbReference type="ChEBI" id="CHEBI:15378"/>
        <dbReference type="ChEBI" id="CHEBI:57453"/>
        <dbReference type="ChEBI" id="CHEBI:78530"/>
        <dbReference type="ChEBI" id="CHEBI:78844"/>
        <dbReference type="ChEBI" id="CHEBI:195366"/>
        <dbReference type="EC" id="2.1.2.9"/>
    </reaction>
</comment>
<comment type="similarity">
    <text evidence="1">Belongs to the Fmt family.</text>
</comment>